<feature type="signal peptide" evidence="4">
    <location>
        <begin position="1"/>
        <end position="37"/>
    </location>
</feature>
<feature type="chain" id="PRO_0000017841" description="Serine hydrolase BPHL">
    <location>
        <begin position="38"/>
        <end position="291"/>
    </location>
</feature>
<feature type="domain" description="AB hydrolase-1" evidence="2">
    <location>
        <begin position="62"/>
        <end position="181"/>
    </location>
</feature>
<feature type="active site" description="Nucleophile" evidence="6">
    <location>
        <position position="139"/>
    </location>
</feature>
<feature type="active site" description="Charge relay system" evidence="3 6">
    <location>
        <position position="244"/>
    </location>
</feature>
<feature type="active site" description="Charge relay system" evidence="3 6">
    <location>
        <position position="272"/>
    </location>
</feature>
<feature type="binding site" evidence="18 19 20 21">
    <location>
        <position position="221"/>
    </location>
    <ligand>
        <name>Mg(2+)</name>
        <dbReference type="ChEBI" id="CHEBI:18420"/>
    </ligand>
</feature>
<feature type="site" description="Binding of alpha-amino group of substrate">
    <location>
        <position position="140"/>
    </location>
</feature>
<feature type="modified residue" description="N6-acetyllysine" evidence="1">
    <location>
        <position position="86"/>
    </location>
</feature>
<feature type="modified residue" description="N6-acetyllysine" evidence="1">
    <location>
        <position position="119"/>
    </location>
</feature>
<feature type="modified residue" description="N6-acetyllysine; alternate" evidence="22">
    <location>
        <position position="126"/>
    </location>
</feature>
<feature type="modified residue" description="N6-succinyllysine; alternate" evidence="1">
    <location>
        <position position="126"/>
    </location>
</feature>
<feature type="modified residue" description="N6-succinyllysine" evidence="1">
    <location>
        <position position="184"/>
    </location>
</feature>
<feature type="modified residue" description="N6-acetyllysine; alternate" evidence="1">
    <location>
        <position position="191"/>
    </location>
</feature>
<feature type="modified residue" description="N6-succinyllysine; alternate" evidence="1">
    <location>
        <position position="191"/>
    </location>
</feature>
<feature type="modified residue" description="N6-acetyllysine" evidence="1">
    <location>
        <position position="217"/>
    </location>
</feature>
<feature type="modified residue" description="N6-acetyllysine" evidence="1">
    <location>
        <position position="243"/>
    </location>
</feature>
<feature type="modified residue" description="N6-acetyllysine; alternate" evidence="1">
    <location>
        <position position="260"/>
    </location>
</feature>
<feature type="modified residue" description="N6-succinyllysine; alternate" evidence="1">
    <location>
        <position position="260"/>
    </location>
</feature>
<feature type="modified residue" description="N6-acetyllysine; alternate" evidence="1">
    <location>
        <position position="271"/>
    </location>
</feature>
<feature type="modified residue" description="N6-succinyllysine; alternate" evidence="1">
    <location>
        <position position="271"/>
    </location>
</feature>
<feature type="splice variant" id="VSP_009115" description="In isoform 2." evidence="12 14">
    <original>MVAVLGGRGVLRLRLLLSALKPGIHVPRAGPAAAFG</original>
    <variation>MPRNLLYSLLSSHLSPHFS</variation>
    <location>
        <begin position="1"/>
        <end position="36"/>
    </location>
</feature>
<feature type="mutagenesis site" description="&lt;0.1% of wild type valacyclovir hydrolase activity." evidence="6">
    <original>S</original>
    <variation>A</variation>
    <location>
        <position position="139"/>
    </location>
</feature>
<feature type="mutagenesis site" description="&lt;0.1% of wild type valacyclovir hydrolase activity." evidence="6">
    <original>D</original>
    <variation>N</variation>
    <location>
        <position position="244"/>
    </location>
</feature>
<feature type="mutagenesis site" description="Complete loss of valacyclovir hydrolase activity." evidence="6">
    <original>H</original>
    <variation>A</variation>
    <location>
        <position position="272"/>
    </location>
</feature>
<feature type="sequence conflict" description="In Ref. 6; CAA40859." evidence="15" ref="6">
    <original>V</original>
    <variation>R</variation>
    <location>
        <position position="182"/>
    </location>
</feature>
<feature type="sequence conflict" description="In Ref. 6; CAA40859." evidence="15" ref="6">
    <original>G</original>
    <variation>A</variation>
    <location>
        <position position="261"/>
    </location>
</feature>
<feature type="strand" evidence="23">
    <location>
        <begin position="40"/>
        <end position="46"/>
    </location>
</feature>
<feature type="strand" evidence="23">
    <location>
        <begin position="49"/>
        <end position="57"/>
    </location>
</feature>
<feature type="strand" evidence="23">
    <location>
        <begin position="60"/>
        <end position="66"/>
    </location>
</feature>
<feature type="helix" evidence="23">
    <location>
        <begin position="73"/>
        <end position="76"/>
    </location>
</feature>
<feature type="helix" evidence="23">
    <location>
        <begin position="78"/>
        <end position="83"/>
    </location>
</feature>
<feature type="turn" evidence="23">
    <location>
        <begin position="86"/>
        <end position="88"/>
    </location>
</feature>
<feature type="strand" evidence="23">
    <location>
        <begin position="89"/>
        <end position="94"/>
    </location>
</feature>
<feature type="helix" evidence="23">
    <location>
        <begin position="113"/>
        <end position="127"/>
    </location>
</feature>
<feature type="strand" evidence="23">
    <location>
        <begin position="131"/>
        <end position="138"/>
    </location>
</feature>
<feature type="helix" evidence="23">
    <location>
        <begin position="140"/>
        <end position="151"/>
    </location>
</feature>
<feature type="turn" evidence="23">
    <location>
        <begin position="153"/>
        <end position="155"/>
    </location>
</feature>
<feature type="strand" evidence="23">
    <location>
        <begin position="156"/>
        <end position="163"/>
    </location>
</feature>
<feature type="helix" evidence="23">
    <location>
        <begin position="170"/>
        <end position="177"/>
    </location>
</feature>
<feature type="helix" evidence="23">
    <location>
        <begin position="182"/>
        <end position="184"/>
    </location>
</feature>
<feature type="helix" evidence="23">
    <location>
        <begin position="187"/>
        <end position="197"/>
    </location>
</feature>
<feature type="helix" evidence="23">
    <location>
        <begin position="199"/>
        <end position="214"/>
    </location>
</feature>
<feature type="helix" evidence="23">
    <location>
        <begin position="215"/>
        <end position="218"/>
    </location>
</feature>
<feature type="helix" evidence="23">
    <location>
        <begin position="220"/>
        <end position="222"/>
    </location>
</feature>
<feature type="strand" evidence="23">
    <location>
        <begin position="223"/>
        <end position="225"/>
    </location>
</feature>
<feature type="helix" evidence="23">
    <location>
        <begin position="226"/>
        <end position="231"/>
    </location>
</feature>
<feature type="strand" evidence="23">
    <location>
        <begin position="236"/>
        <end position="241"/>
    </location>
</feature>
<feature type="strand" evidence="23">
    <location>
        <begin position="245"/>
        <end position="247"/>
    </location>
</feature>
<feature type="helix" evidence="23">
    <location>
        <begin position="249"/>
        <end position="258"/>
    </location>
</feature>
<feature type="strand" evidence="23">
    <location>
        <begin position="263"/>
        <end position="267"/>
    </location>
</feature>
<feature type="helix" evidence="23">
    <location>
        <begin position="274"/>
        <end position="277"/>
    </location>
</feature>
<feature type="helix" evidence="23">
    <location>
        <begin position="279"/>
        <end position="290"/>
    </location>
</feature>
<protein>
    <recommendedName>
        <fullName>Serine hydrolase BPHL</fullName>
        <ecNumber evidence="4 5 6 7 8">3.1.-.-</ecNumber>
    </recommendedName>
    <alternativeName>
        <fullName>Biphenyl hydrolase-like protein</fullName>
    </alternativeName>
    <alternativeName>
        <fullName>Biphenyl hydrolase-related protein</fullName>
        <shortName>Bph-rp</shortName>
    </alternativeName>
    <alternativeName>
        <fullName>Breast epithelial mucin-associated antigen</fullName>
        <shortName>MCNAA</shortName>
    </alternativeName>
    <alternativeName>
        <fullName>L-homocysteine-thiolactonase BPHL</fullName>
    </alternativeName>
    <alternativeName>
        <fullName>Valacyclovir hydrolase</fullName>
        <shortName evidence="13">VACVase</shortName>
        <shortName evidence="13">Valacyclovirase</shortName>
    </alternativeName>
</protein>
<name>BPHL_HUMAN</name>
<comment type="function">
    <text evidence="4 5 6 7 8">Specific alpha-amino acid ester serine hydrolase that prefers small, hydrophobic, and aromatic side chains and does not have a stringent requirement for the leaving group other than preferring a primary alcohol (PubMed:12732646, PubMed:15832508, PubMed:18256025, PubMed:25333274, PubMed:32196348). Has homocysteine-thiolactonase activity (in vitro) and may play a significant role in the detoxification of homocysteine thiolactone in vivo (PubMed:25333274). Catalyzes the hydrolytic activation of amino acid ester prodrugs of nucleoside analogs such as valacyclovir and valganciclovir, converting them into their active forms (acyclovir and ganciclovir) (PubMed:15832508, PubMed:18256025).</text>
</comment>
<comment type="catalytic activity">
    <reaction evidence="7">
        <text>L-homocysteine thiolactone + H2O = L-homocysteine + H(+)</text>
        <dbReference type="Rhea" id="RHEA:83867"/>
        <dbReference type="ChEBI" id="CHEBI:15377"/>
        <dbReference type="ChEBI" id="CHEBI:15378"/>
        <dbReference type="ChEBI" id="CHEBI:58199"/>
        <dbReference type="ChEBI" id="CHEBI:233452"/>
    </reaction>
    <physiologicalReaction direction="left-to-right" evidence="16">
        <dbReference type="Rhea" id="RHEA:83868"/>
    </physiologicalReaction>
</comment>
<comment type="catalytic activity">
    <reaction evidence="4 5 6 8">
        <text>valacyclovir + H2O = acyclovir + L-valine + H(+)</text>
        <dbReference type="Rhea" id="RHEA:83871"/>
        <dbReference type="ChEBI" id="CHEBI:2453"/>
        <dbReference type="ChEBI" id="CHEBI:15377"/>
        <dbReference type="ChEBI" id="CHEBI:15378"/>
        <dbReference type="ChEBI" id="CHEBI:57762"/>
        <dbReference type="ChEBI" id="CHEBI:233453"/>
    </reaction>
    <physiologicalReaction direction="left-to-right" evidence="17">
        <dbReference type="Rhea" id="RHEA:83872"/>
    </physiologicalReaction>
</comment>
<comment type="biophysicochemical properties">
    <kinetics>
        <KM evidence="7">3.92 mM for L-homocysteine thiolactone</KM>
        <Vmax evidence="7">454.0 mmol/min/mg enzyme with L-homocysteine thiolactone as substrate</Vmax>
        <text evidence="7">kcat is 246.24 sec(-1) with L-homocysteine thiolactone as substrate.</text>
    </kinetics>
</comment>
<comment type="subunit">
    <text evidence="6 11">Monomer. May also form homodimers.</text>
</comment>
<comment type="interaction">
    <interactant intactId="EBI-21843491">
        <id>Q86WA6-2</id>
    </interactant>
    <interactant intactId="EBI-12001340">
        <id>P62508-3</id>
        <label>ESRRG</label>
    </interactant>
    <organismsDiffer>false</organismsDiffer>
    <experiments>3</experiments>
</comment>
<comment type="subcellular location">
    <subcellularLocation>
        <location evidence="9">Mitochondrion</location>
    </subcellularLocation>
</comment>
<comment type="alternative products">
    <event type="alternative splicing"/>
    <isoform>
        <id>Q86WA6-1</id>
        <name>1</name>
        <name>Beta</name>
        <sequence type="displayed"/>
    </isoform>
    <isoform>
        <id>Q86WA6-2</id>
        <name>2</name>
        <name>Alpha</name>
        <sequence type="described" ref="VSP_009115"/>
    </isoform>
</comment>
<comment type="tissue specificity">
    <text evidence="10">Expressed at high levels in liver and kidney and lower levels in heart, intestine and skeletal muscle.</text>
</comment>
<comment type="similarity">
    <text evidence="15">Belongs to the AB hydrolase superfamily. Lipase family.</text>
</comment>
<dbReference type="EC" id="3.1.-.-" evidence="4 5 6 7 8"/>
<dbReference type="EMBL" id="X81372">
    <property type="protein sequence ID" value="CAA57137.1"/>
    <property type="molecule type" value="mRNA"/>
</dbReference>
<dbReference type="EMBL" id="AJ617684">
    <property type="protein sequence ID" value="CAE85120.1"/>
    <property type="molecule type" value="mRNA"/>
</dbReference>
<dbReference type="EMBL" id="AL031963">
    <property type="status" value="NOT_ANNOTATED_CDS"/>
    <property type="molecule type" value="Genomic_DNA"/>
</dbReference>
<dbReference type="EMBL" id="CH471087">
    <property type="protein sequence ID" value="EAW55122.1"/>
    <property type="molecule type" value="Genomic_DNA"/>
</dbReference>
<dbReference type="EMBL" id="BC106901">
    <property type="protein sequence ID" value="AAI06902.1"/>
    <property type="molecule type" value="mRNA"/>
</dbReference>
<dbReference type="EMBL" id="X57653">
    <property type="protein sequence ID" value="CAA40859.1"/>
    <property type="molecule type" value="mRNA"/>
</dbReference>
<dbReference type="CCDS" id="CCDS4483.2">
    <molecule id="Q86WA6-1"/>
</dbReference>
<dbReference type="CCDS" id="CCDS78105.1">
    <molecule id="Q86WA6-2"/>
</dbReference>
<dbReference type="PIR" id="A56716">
    <property type="entry name" value="A56716"/>
</dbReference>
<dbReference type="RefSeq" id="NP_001289706.1">
    <molecule id="Q86WA6-2"/>
    <property type="nucleotide sequence ID" value="NM_001302777.1"/>
</dbReference>
<dbReference type="RefSeq" id="NP_004323.2">
    <molecule id="Q86WA6-1"/>
    <property type="nucleotide sequence ID" value="NM_004332.4"/>
</dbReference>
<dbReference type="PDB" id="2OCG">
    <property type="method" value="X-ray"/>
    <property type="resolution" value="1.75 A"/>
    <property type="chains" value="A=38-291"/>
</dbReference>
<dbReference type="PDB" id="2OCI">
    <property type="method" value="X-ray"/>
    <property type="resolution" value="1.90 A"/>
    <property type="chains" value="A=38-291"/>
</dbReference>
<dbReference type="PDB" id="2OCK">
    <property type="method" value="X-ray"/>
    <property type="resolution" value="1.85 A"/>
    <property type="chains" value="A=38-291"/>
</dbReference>
<dbReference type="PDB" id="2OCL">
    <property type="method" value="X-ray"/>
    <property type="resolution" value="1.90 A"/>
    <property type="chains" value="A=38-291"/>
</dbReference>
<dbReference type="PDBsum" id="2OCG"/>
<dbReference type="PDBsum" id="2OCI"/>
<dbReference type="PDBsum" id="2OCK"/>
<dbReference type="PDBsum" id="2OCL"/>
<dbReference type="SMR" id="Q86WA6"/>
<dbReference type="BioGRID" id="107138">
    <property type="interactions" value="49"/>
</dbReference>
<dbReference type="FunCoup" id="Q86WA6">
    <property type="interactions" value="540"/>
</dbReference>
<dbReference type="IntAct" id="Q86WA6">
    <property type="interactions" value="28"/>
</dbReference>
<dbReference type="STRING" id="9606.ENSP00000369739"/>
<dbReference type="ChEMBL" id="CHEMBL3308924"/>
<dbReference type="DrugBank" id="DB03380">
    <property type="generic name" value="L-tyrosinamide"/>
</dbReference>
<dbReference type="ESTHER" id="human-BPHL">
    <property type="family name" value="Valacyclovir-hydrolase"/>
</dbReference>
<dbReference type="MEROPS" id="S33.982"/>
<dbReference type="iPTMnet" id="Q86WA6"/>
<dbReference type="PhosphoSitePlus" id="Q86WA6"/>
<dbReference type="SwissPalm" id="Q86WA6"/>
<dbReference type="BioMuta" id="BPHL"/>
<dbReference type="DMDM" id="39931107"/>
<dbReference type="jPOST" id="Q86WA6"/>
<dbReference type="MassIVE" id="Q86WA6"/>
<dbReference type="PaxDb" id="9606-ENSP00000369739"/>
<dbReference type="PeptideAtlas" id="Q86WA6"/>
<dbReference type="ProteomicsDB" id="70136">
    <molecule id="Q86WA6-1"/>
</dbReference>
<dbReference type="ProteomicsDB" id="70137">
    <molecule id="Q86WA6-2"/>
</dbReference>
<dbReference type="Pumba" id="Q86WA6"/>
<dbReference type="Antibodypedia" id="24354">
    <property type="antibodies" value="129 antibodies from 23 providers"/>
</dbReference>
<dbReference type="DNASU" id="670"/>
<dbReference type="Ensembl" id="ENST00000380375.4">
    <molecule id="Q86WA6-2"/>
    <property type="protein sequence ID" value="ENSP00000369734.3"/>
    <property type="gene ID" value="ENSG00000137274.14"/>
</dbReference>
<dbReference type="Ensembl" id="ENST00000380379.10">
    <molecule id="Q86WA6-1"/>
    <property type="protein sequence ID" value="ENSP00000369739.5"/>
    <property type="gene ID" value="ENSG00000137274.14"/>
</dbReference>
<dbReference type="Ensembl" id="ENST00000434640.6">
    <molecule id="Q86WA6-2"/>
    <property type="protein sequence ID" value="ENSP00000390472.1"/>
    <property type="gene ID" value="ENSG00000137274.14"/>
</dbReference>
<dbReference type="GeneID" id="670"/>
<dbReference type="KEGG" id="hsa:670"/>
<dbReference type="MANE-Select" id="ENST00000380379.10">
    <property type="protein sequence ID" value="ENSP00000369739.5"/>
    <property type="RefSeq nucleotide sequence ID" value="NM_004332.4"/>
    <property type="RefSeq protein sequence ID" value="NP_004323.2"/>
</dbReference>
<dbReference type="UCSC" id="uc003mva.4">
    <molecule id="Q86WA6-1"/>
    <property type="organism name" value="human"/>
</dbReference>
<dbReference type="AGR" id="HGNC:1094"/>
<dbReference type="CTD" id="670"/>
<dbReference type="DisGeNET" id="670"/>
<dbReference type="GeneCards" id="BPHL"/>
<dbReference type="HGNC" id="HGNC:1094">
    <property type="gene designation" value="BPHL"/>
</dbReference>
<dbReference type="HPA" id="ENSG00000137274">
    <property type="expression patterns" value="Tissue enhanced (kidney, liver)"/>
</dbReference>
<dbReference type="MIM" id="603156">
    <property type="type" value="gene"/>
</dbReference>
<dbReference type="neXtProt" id="NX_Q86WA6"/>
<dbReference type="OpenTargets" id="ENSG00000137274"/>
<dbReference type="PharmGKB" id="PA25402"/>
<dbReference type="VEuPathDB" id="HostDB:ENSG00000137274"/>
<dbReference type="eggNOG" id="KOG2984">
    <property type="taxonomic scope" value="Eukaryota"/>
</dbReference>
<dbReference type="GeneTree" id="ENSGT00390000004746"/>
<dbReference type="HOGENOM" id="CLU_020336_50_5_1"/>
<dbReference type="InParanoid" id="Q86WA6"/>
<dbReference type="OMA" id="RFPQLWA"/>
<dbReference type="OrthoDB" id="19657at2759"/>
<dbReference type="PAN-GO" id="Q86WA6">
    <property type="GO annotations" value="0 GO annotations based on evolutionary models"/>
</dbReference>
<dbReference type="PhylomeDB" id="Q86WA6"/>
<dbReference type="TreeFam" id="TF318389"/>
<dbReference type="PathwayCommons" id="Q86WA6"/>
<dbReference type="Reactome" id="R-HSA-211945">
    <property type="pathway name" value="Phase I - Functionalization of compounds"/>
</dbReference>
<dbReference type="SABIO-RK" id="Q86WA6"/>
<dbReference type="SignaLink" id="Q86WA6"/>
<dbReference type="BioGRID-ORCS" id="670">
    <property type="hits" value="11 hits in 1164 CRISPR screens"/>
</dbReference>
<dbReference type="ChiTaRS" id="BPHL">
    <property type="organism name" value="human"/>
</dbReference>
<dbReference type="EvolutionaryTrace" id="Q86WA6"/>
<dbReference type="GenomeRNAi" id="670"/>
<dbReference type="Pharos" id="Q86WA6">
    <property type="development level" value="Tbio"/>
</dbReference>
<dbReference type="PRO" id="PR:Q86WA6"/>
<dbReference type="Proteomes" id="UP000005640">
    <property type="component" value="Chromosome 6"/>
</dbReference>
<dbReference type="RNAct" id="Q86WA6">
    <property type="molecule type" value="protein"/>
</dbReference>
<dbReference type="Bgee" id="ENSG00000137274">
    <property type="expression patterns" value="Expressed in right lobe of liver and 168 other cell types or tissues"/>
</dbReference>
<dbReference type="ExpressionAtlas" id="Q86WA6">
    <property type="expression patterns" value="baseline and differential"/>
</dbReference>
<dbReference type="GO" id="GO:0005741">
    <property type="term" value="C:mitochondrial outer membrane"/>
    <property type="evidence" value="ECO:0000304"/>
    <property type="project" value="Reactome"/>
</dbReference>
<dbReference type="GO" id="GO:0005739">
    <property type="term" value="C:mitochondrion"/>
    <property type="evidence" value="ECO:0000314"/>
    <property type="project" value="UniProtKB"/>
</dbReference>
<dbReference type="GO" id="GO:0047658">
    <property type="term" value="F:alpha-amino-acid esterase activity"/>
    <property type="evidence" value="ECO:0000314"/>
    <property type="project" value="UniProtKB"/>
</dbReference>
<dbReference type="GO" id="GO:0017171">
    <property type="term" value="F:serine hydrolase activity"/>
    <property type="evidence" value="ECO:0000314"/>
    <property type="project" value="UniProtKB"/>
</dbReference>
<dbReference type="GO" id="GO:0006520">
    <property type="term" value="P:amino acid metabolic process"/>
    <property type="evidence" value="ECO:0000304"/>
    <property type="project" value="ProtInc"/>
</dbReference>
<dbReference type="GO" id="GO:0050667">
    <property type="term" value="P:homocysteine metabolic process"/>
    <property type="evidence" value="ECO:0000314"/>
    <property type="project" value="UniProtKB"/>
</dbReference>
<dbReference type="GO" id="GO:0009636">
    <property type="term" value="P:response to toxic substance"/>
    <property type="evidence" value="ECO:0000304"/>
    <property type="project" value="ProtInc"/>
</dbReference>
<dbReference type="GO" id="GO:0006805">
    <property type="term" value="P:xenobiotic metabolic process"/>
    <property type="evidence" value="ECO:0000314"/>
    <property type="project" value="UniProtKB"/>
</dbReference>
<dbReference type="FunFam" id="3.40.50.1820:FF:000181">
    <property type="entry name" value="valacyclovir hydrolase isoform X2"/>
    <property type="match status" value="1"/>
</dbReference>
<dbReference type="Gene3D" id="3.40.50.1820">
    <property type="entry name" value="alpha/beta hydrolase"/>
    <property type="match status" value="1"/>
</dbReference>
<dbReference type="InterPro" id="IPR000073">
    <property type="entry name" value="AB_hydrolase_1"/>
</dbReference>
<dbReference type="InterPro" id="IPR029058">
    <property type="entry name" value="AB_hydrolase_fold"/>
</dbReference>
<dbReference type="PANTHER" id="PTHR46331">
    <property type="entry name" value="VALACYCLOVIR HYDROLASE"/>
    <property type="match status" value="1"/>
</dbReference>
<dbReference type="PANTHER" id="PTHR46331:SF2">
    <property type="entry name" value="VALACYCLOVIR HYDROLASE"/>
    <property type="match status" value="1"/>
</dbReference>
<dbReference type="Pfam" id="PF00561">
    <property type="entry name" value="Abhydrolase_1"/>
    <property type="match status" value="1"/>
</dbReference>
<dbReference type="SUPFAM" id="SSF53474">
    <property type="entry name" value="alpha/beta-Hydrolases"/>
    <property type="match status" value="1"/>
</dbReference>
<dbReference type="PROSITE" id="PS00120">
    <property type="entry name" value="LIPASE_SER"/>
    <property type="match status" value="1"/>
</dbReference>
<evidence type="ECO:0000250" key="1">
    <source>
        <dbReference type="UniProtKB" id="Q8R164"/>
    </source>
</evidence>
<evidence type="ECO:0000255" key="2"/>
<evidence type="ECO:0000255" key="3">
    <source>
        <dbReference type="PROSITE-ProRule" id="PRU10037"/>
    </source>
</evidence>
<evidence type="ECO:0000269" key="4">
    <source>
    </source>
</evidence>
<evidence type="ECO:0000269" key="5">
    <source>
    </source>
</evidence>
<evidence type="ECO:0000269" key="6">
    <source>
    </source>
</evidence>
<evidence type="ECO:0000269" key="7">
    <source>
    </source>
</evidence>
<evidence type="ECO:0000269" key="8">
    <source>
    </source>
</evidence>
<evidence type="ECO:0000269" key="9">
    <source>
    </source>
</evidence>
<evidence type="ECO:0000269" key="10">
    <source>
    </source>
</evidence>
<evidence type="ECO:0000269" key="11">
    <source ref="9"/>
</evidence>
<evidence type="ECO:0000303" key="12">
    <source>
    </source>
</evidence>
<evidence type="ECO:0000303" key="13">
    <source>
    </source>
</evidence>
<evidence type="ECO:0000303" key="14">
    <source>
    </source>
</evidence>
<evidence type="ECO:0000305" key="15"/>
<evidence type="ECO:0000305" key="16">
    <source>
    </source>
</evidence>
<evidence type="ECO:0000305" key="17">
    <source>
    </source>
</evidence>
<evidence type="ECO:0007744" key="18">
    <source>
        <dbReference type="PDB" id="2OCG"/>
    </source>
</evidence>
<evidence type="ECO:0007744" key="19">
    <source>
        <dbReference type="PDB" id="2OCI"/>
    </source>
</evidence>
<evidence type="ECO:0007744" key="20">
    <source>
        <dbReference type="PDB" id="2OCK"/>
    </source>
</evidence>
<evidence type="ECO:0007744" key="21">
    <source>
        <dbReference type="PDB" id="2OCL"/>
    </source>
</evidence>
<evidence type="ECO:0007744" key="22">
    <source>
    </source>
</evidence>
<evidence type="ECO:0007829" key="23">
    <source>
        <dbReference type="PDB" id="2OCG"/>
    </source>
</evidence>
<sequence>MVAVLGGRGVLRLRLLLSALKPGIHVPRAGPAAAFGTSVTSAKVAVNGVQLHYQQTGEGDHAVLLLPGMLGSGETDFGPQLKNLNKKLFTVVAWDPRGYGHSRPPDRDFPADFFERDAKDAVDLMKALKFKKVSLLGWSDGGITALIAAAKYPSYIHKMVIWGANAYVTDEDSMIYEGIRDVSKWSERTRKPLEALYGYDYFARTCEKWVDGIRQFKHLPDGNICRHLLPRVQCPALIVHGEKDPLVPRFHADFIHKHVKGSRLHLMPEGKHNLHLRFADEFNKLAEDFLQ</sequence>
<organism>
    <name type="scientific">Homo sapiens</name>
    <name type="common">Human</name>
    <dbReference type="NCBI Taxonomy" id="9606"/>
    <lineage>
        <taxon>Eukaryota</taxon>
        <taxon>Metazoa</taxon>
        <taxon>Chordata</taxon>
        <taxon>Craniata</taxon>
        <taxon>Vertebrata</taxon>
        <taxon>Euteleostomi</taxon>
        <taxon>Mammalia</taxon>
        <taxon>Eutheria</taxon>
        <taxon>Euarchontoglires</taxon>
        <taxon>Primates</taxon>
        <taxon>Haplorrhini</taxon>
        <taxon>Catarrhini</taxon>
        <taxon>Hominidae</taxon>
        <taxon>Homo</taxon>
    </lineage>
</organism>
<reference key="1">
    <citation type="journal article" date="1995" name="J. Biol. Chem.">
        <title>Cloning and expression analysis of a novel human serine hydrolase with sequence similarity to prokaryotic enzymes involved in the degradation of aromatic compounds.</title>
        <authorList>
            <person name="Puente X.S."/>
            <person name="Lopez-Otin C."/>
        </authorList>
    </citation>
    <scope>NUCLEOTIDE SEQUENCE [MRNA] (ISOFORM 2)</scope>
    <scope>PROTEIN SEQUENCE OF 152-158; 181-184 AND 209-214</scope>
    <scope>TISSUE SPECIFICITY</scope>
    <source>
        <tissue>Mammary carcinoma</tissue>
    </source>
</reference>
<reference key="2">
    <citation type="submission" date="2003-12" db="EMBL/GenBank/DDBJ databases">
        <authorList>
            <person name="Puente X.S."/>
        </authorList>
    </citation>
    <scope>NUCLEOTIDE SEQUENCE [MRNA] (ISOFORM 1)</scope>
</reference>
<reference key="3">
    <citation type="journal article" date="2003" name="Nature">
        <title>The DNA sequence and analysis of human chromosome 6.</title>
        <authorList>
            <person name="Mungall A.J."/>
            <person name="Palmer S.A."/>
            <person name="Sims S.K."/>
            <person name="Edwards C.A."/>
            <person name="Ashurst J.L."/>
            <person name="Wilming L."/>
            <person name="Jones M.C."/>
            <person name="Horton R."/>
            <person name="Hunt S.E."/>
            <person name="Scott C.E."/>
            <person name="Gilbert J.G.R."/>
            <person name="Clamp M.E."/>
            <person name="Bethel G."/>
            <person name="Milne S."/>
            <person name="Ainscough R."/>
            <person name="Almeida J.P."/>
            <person name="Ambrose K.D."/>
            <person name="Andrews T.D."/>
            <person name="Ashwell R.I.S."/>
            <person name="Babbage A.K."/>
            <person name="Bagguley C.L."/>
            <person name="Bailey J."/>
            <person name="Banerjee R."/>
            <person name="Barker D.J."/>
            <person name="Barlow K.F."/>
            <person name="Bates K."/>
            <person name="Beare D.M."/>
            <person name="Beasley H."/>
            <person name="Beasley O."/>
            <person name="Bird C.P."/>
            <person name="Blakey S.E."/>
            <person name="Bray-Allen S."/>
            <person name="Brook J."/>
            <person name="Brown A.J."/>
            <person name="Brown J.Y."/>
            <person name="Burford D.C."/>
            <person name="Burrill W."/>
            <person name="Burton J."/>
            <person name="Carder C."/>
            <person name="Carter N.P."/>
            <person name="Chapman J.C."/>
            <person name="Clark S.Y."/>
            <person name="Clark G."/>
            <person name="Clee C.M."/>
            <person name="Clegg S."/>
            <person name="Cobley V."/>
            <person name="Collier R.E."/>
            <person name="Collins J.E."/>
            <person name="Colman L.K."/>
            <person name="Corby N.R."/>
            <person name="Coville G.J."/>
            <person name="Culley K.M."/>
            <person name="Dhami P."/>
            <person name="Davies J."/>
            <person name="Dunn M."/>
            <person name="Earthrowl M.E."/>
            <person name="Ellington A.E."/>
            <person name="Evans K.A."/>
            <person name="Faulkner L."/>
            <person name="Francis M.D."/>
            <person name="Frankish A."/>
            <person name="Frankland J."/>
            <person name="French L."/>
            <person name="Garner P."/>
            <person name="Garnett J."/>
            <person name="Ghori M.J."/>
            <person name="Gilby L.M."/>
            <person name="Gillson C.J."/>
            <person name="Glithero R.J."/>
            <person name="Grafham D.V."/>
            <person name="Grant M."/>
            <person name="Gribble S."/>
            <person name="Griffiths C."/>
            <person name="Griffiths M.N.D."/>
            <person name="Hall R."/>
            <person name="Halls K.S."/>
            <person name="Hammond S."/>
            <person name="Harley J.L."/>
            <person name="Hart E.A."/>
            <person name="Heath P.D."/>
            <person name="Heathcott R."/>
            <person name="Holmes S.J."/>
            <person name="Howden P.J."/>
            <person name="Howe K.L."/>
            <person name="Howell G.R."/>
            <person name="Huckle E."/>
            <person name="Humphray S.J."/>
            <person name="Humphries M.D."/>
            <person name="Hunt A.R."/>
            <person name="Johnson C.M."/>
            <person name="Joy A.A."/>
            <person name="Kay M."/>
            <person name="Keenan S.J."/>
            <person name="Kimberley A.M."/>
            <person name="King A."/>
            <person name="Laird G.K."/>
            <person name="Langford C."/>
            <person name="Lawlor S."/>
            <person name="Leongamornlert D.A."/>
            <person name="Leversha M."/>
            <person name="Lloyd C.R."/>
            <person name="Lloyd D.M."/>
            <person name="Loveland J.E."/>
            <person name="Lovell J."/>
            <person name="Martin S."/>
            <person name="Mashreghi-Mohammadi M."/>
            <person name="Maslen G.L."/>
            <person name="Matthews L."/>
            <person name="McCann O.T."/>
            <person name="McLaren S.J."/>
            <person name="McLay K."/>
            <person name="McMurray A."/>
            <person name="Moore M.J.F."/>
            <person name="Mullikin J.C."/>
            <person name="Niblett D."/>
            <person name="Nickerson T."/>
            <person name="Novik K.L."/>
            <person name="Oliver K."/>
            <person name="Overton-Larty E.K."/>
            <person name="Parker A."/>
            <person name="Patel R."/>
            <person name="Pearce A.V."/>
            <person name="Peck A.I."/>
            <person name="Phillimore B.J.C.T."/>
            <person name="Phillips S."/>
            <person name="Plumb R.W."/>
            <person name="Porter K.M."/>
            <person name="Ramsey Y."/>
            <person name="Ranby S.A."/>
            <person name="Rice C.M."/>
            <person name="Ross M.T."/>
            <person name="Searle S.M."/>
            <person name="Sehra H.K."/>
            <person name="Sheridan E."/>
            <person name="Skuce C.D."/>
            <person name="Smith S."/>
            <person name="Smith M."/>
            <person name="Spraggon L."/>
            <person name="Squares S.L."/>
            <person name="Steward C.A."/>
            <person name="Sycamore N."/>
            <person name="Tamlyn-Hall G."/>
            <person name="Tester J."/>
            <person name="Theaker A.J."/>
            <person name="Thomas D.W."/>
            <person name="Thorpe A."/>
            <person name="Tracey A."/>
            <person name="Tromans A."/>
            <person name="Tubby B."/>
            <person name="Wall M."/>
            <person name="Wallis J.M."/>
            <person name="West A.P."/>
            <person name="White S.S."/>
            <person name="Whitehead S.L."/>
            <person name="Whittaker H."/>
            <person name="Wild A."/>
            <person name="Willey D.J."/>
            <person name="Wilmer T.E."/>
            <person name="Wood J.M."/>
            <person name="Wray P.W."/>
            <person name="Wyatt J.C."/>
            <person name="Young L."/>
            <person name="Younger R.M."/>
            <person name="Bentley D.R."/>
            <person name="Coulson A."/>
            <person name="Durbin R.M."/>
            <person name="Hubbard T."/>
            <person name="Sulston J.E."/>
            <person name="Dunham I."/>
            <person name="Rogers J."/>
            <person name="Beck S."/>
        </authorList>
    </citation>
    <scope>NUCLEOTIDE SEQUENCE [LARGE SCALE GENOMIC DNA] (ISOFORMS 1 AND 2)</scope>
    <source>
        <tissue>Mammary carcinoma</tissue>
    </source>
</reference>
<reference key="4">
    <citation type="submission" date="2005-07" db="EMBL/GenBank/DDBJ databases">
        <authorList>
            <person name="Mural R.J."/>
            <person name="Istrail S."/>
            <person name="Sutton G.G."/>
            <person name="Florea L."/>
            <person name="Halpern A.L."/>
            <person name="Mobarry C.M."/>
            <person name="Lippert R."/>
            <person name="Walenz B."/>
            <person name="Shatkay H."/>
            <person name="Dew I."/>
            <person name="Miller J.R."/>
            <person name="Flanigan M.J."/>
            <person name="Edwards N.J."/>
            <person name="Bolanos R."/>
            <person name="Fasulo D."/>
            <person name="Halldorsson B.V."/>
            <person name="Hannenhalli S."/>
            <person name="Turner R."/>
            <person name="Yooseph S."/>
            <person name="Lu F."/>
            <person name="Nusskern D.R."/>
            <person name="Shue B.C."/>
            <person name="Zheng X.H."/>
            <person name="Zhong F."/>
            <person name="Delcher A.L."/>
            <person name="Huson D.H."/>
            <person name="Kravitz S.A."/>
            <person name="Mouchard L."/>
            <person name="Reinert K."/>
            <person name="Remington K.A."/>
            <person name="Clark A.G."/>
            <person name="Waterman M.S."/>
            <person name="Eichler E.E."/>
            <person name="Adams M.D."/>
            <person name="Hunkapiller M.W."/>
            <person name="Myers E.W."/>
            <person name="Venter J.C."/>
        </authorList>
    </citation>
    <scope>NUCLEOTIDE SEQUENCE [LARGE SCALE GENOMIC DNA]</scope>
</reference>
<reference key="5">
    <citation type="journal article" date="2004" name="Genome Res.">
        <title>The status, quality, and expansion of the NIH full-length cDNA project: the Mammalian Gene Collection (MGC).</title>
        <authorList>
            <consortium name="The MGC Project Team"/>
        </authorList>
    </citation>
    <scope>NUCLEOTIDE SEQUENCE [LARGE SCALE MRNA] (ISOFORM 2)</scope>
</reference>
<reference key="6">
    <citation type="journal article" date="1990" name="Cancer Res.">
        <title>Cloning and sequencing of a complementary DNA encoding a M(r) 70,000 human breast epithelial mucin-associated antigen.</title>
        <authorList>
            <person name="Larocca D."/>
            <person name="Peterson J.A."/>
            <person name="Walkup G."/>
            <person name="Urrea R."/>
            <person name="Ceriani R.L."/>
        </authorList>
    </citation>
    <scope>NUCLEOTIDE SEQUENCE [MRNA] OF 182-280</scope>
</reference>
<reference key="7">
    <citation type="journal article" date="2003" name="J. Biol. Chem.">
        <title>Identification of a human valacyclovirase: biphenyl hydrolase-like protein as valacyclovir hydrolase.</title>
        <authorList>
            <person name="Kim I."/>
            <person name="Chu X.-Y."/>
            <person name="Kim S."/>
            <person name="Provoda C.J."/>
            <person name="Lee K.-D."/>
            <person name="Amidon G.L."/>
        </authorList>
    </citation>
    <scope>PROTEIN SEQUENCE OF 38-56</scope>
    <scope>FUNCTION</scope>
    <scope>CATALYTIC ACTIVITY</scope>
</reference>
<reference key="8">
    <citation type="journal article" date="1998" name="Genomics">
        <title>Structural characterization and chromosomal localization of the gene encoding human biphenyl hydrolase-related protein (BPHL).</title>
        <authorList>
            <person name="Puente X.S."/>
            <person name="Pendas A.M."/>
            <person name="Lopez-Otin C."/>
        </authorList>
    </citation>
    <scope>CHROMOSOMAL LOCATION</scope>
</reference>
<reference key="9">
    <citation type="submission" date="2003-12" db="UniProtKB">
        <authorList>
            <person name="Kim I."/>
        </authorList>
    </citation>
    <scope>SUBUNIT</scope>
</reference>
<reference key="10">
    <citation type="journal article" date="2004" name="Mol. Pharm.">
        <title>A novel nucleoside prodrug-activating enzyme: substrate specificity of biphenyl hydrolase-like protein.</title>
        <authorList>
            <person name="Kim I."/>
            <person name="Song X."/>
            <person name="Vig B.S."/>
            <person name="Mittal S."/>
            <person name="Shin H.-C."/>
            <person name="Lorenzi P.J."/>
            <person name="Amidon G.L."/>
        </authorList>
    </citation>
    <scope>FUNCTION</scope>
    <scope>CATALYTIC ACTIVITY</scope>
    <scope>SUBSTRATE SPECIFICITY</scope>
</reference>
<reference key="11">
    <citation type="journal article" date="2009" name="Science">
        <title>Lysine acetylation targets protein complexes and co-regulates major cellular functions.</title>
        <authorList>
            <person name="Choudhary C."/>
            <person name="Kumar C."/>
            <person name="Gnad F."/>
            <person name="Nielsen M.L."/>
            <person name="Rehman M."/>
            <person name="Walther T.C."/>
            <person name="Olsen J.V."/>
            <person name="Mann M."/>
        </authorList>
    </citation>
    <scope>ACETYLATION [LARGE SCALE ANALYSIS] AT LYS-126</scope>
    <scope>IDENTIFICATION BY MASS SPECTROMETRY [LARGE SCALE ANALYSIS]</scope>
</reference>
<reference key="12">
    <citation type="journal article" date="2011" name="BMC Syst. Biol.">
        <title>Initial characterization of the human central proteome.</title>
        <authorList>
            <person name="Burkard T.R."/>
            <person name="Planyavsky M."/>
            <person name="Kaupe I."/>
            <person name="Breitwieser F.P."/>
            <person name="Buerckstuemmer T."/>
            <person name="Bennett K.L."/>
            <person name="Superti-Furga G."/>
            <person name="Colinge J."/>
        </authorList>
    </citation>
    <scope>IDENTIFICATION BY MASS SPECTROMETRY [LARGE SCALE ANALYSIS]</scope>
</reference>
<reference key="13">
    <citation type="journal article" date="2015" name="Proteomics">
        <title>N-terminome analysis of the human mitochondrial proteome.</title>
        <authorList>
            <person name="Vaca Jacome A.S."/>
            <person name="Rabilloud T."/>
            <person name="Schaeffer-Reiss C."/>
            <person name="Rompais M."/>
            <person name="Ayoub D."/>
            <person name="Lane L."/>
            <person name="Bairoch A."/>
            <person name="Van Dorsselaer A."/>
            <person name="Carapito C."/>
        </authorList>
    </citation>
    <scope>IDENTIFICATION BY MASS SPECTROMETRY [LARGE SCALE ANALYSIS]</scope>
</reference>
<reference key="14">
    <citation type="journal article" date="2008" name="J. Biol. Chem.">
        <title>Molecular basis of prodrug activation by human valacyclovirase, an alpha-amino acid ester hydrolase.</title>
        <authorList>
            <person name="Lai L."/>
            <person name="Xu Z."/>
            <person name="Zhou J."/>
            <person name="Lee K.D."/>
            <person name="Amidon G.L."/>
        </authorList>
    </citation>
    <scope>X-RAY CRYSTALLOGRAPHY (1.75 ANGSTROMS) OF 38-291 IN COMPLEX WITH MG(2+) AND MN(2+)</scope>
    <scope>FUNCTION</scope>
    <scope>CATALYTIC ACTIVITY</scope>
    <scope>SUBUNIT</scope>
    <scope>ACTIVE SITES</scope>
    <scope>MUTAGENESIS OF SER-139; ASP-244 AND HIS-272</scope>
    <scope>SUBSTRATE SPECIFICITY</scope>
</reference>
<reference key="15">
    <citation type="journal article" date="2014" name="PLoS ONE">
        <title>Human valacyclovir hydrolase/biphenyl hydrolase-like protein is a highly efficient homocysteine thiolactonase.</title>
        <authorList>
            <person name="Marsillach J."/>
            <person name="Suzuki S.M."/>
            <person name="Richter R.J."/>
            <person name="McDonald M.G."/>
            <person name="Rademacher P.M."/>
            <person name="MacCoss M.J."/>
            <person name="Hsieh E.J."/>
            <person name="Rettie A.E."/>
            <person name="Furlong C.E."/>
        </authorList>
    </citation>
    <scope>FUNCTION</scope>
    <scope>CATALYTIC ACTIVITY</scope>
</reference>
<reference key="16">
    <citation type="journal article" date="2020" name="Mol. Pharm.">
        <title>Chemoproteomic Identification of Serine Hydrolase RBBP9 as a Valacyclovir-Activating Enzyme.</title>
        <authorList>
            <person name="Shenoy V.M."/>
            <person name="Thompson B.R."/>
            <person name="Shi J."/>
            <person name="Zhu H.J."/>
            <person name="Smith D.E."/>
            <person name="Amidon G.L."/>
        </authorList>
    </citation>
    <scope>FUNCTION</scope>
    <scope>CATALYTIC ACTIVITY</scope>
    <scope>BIOPHYSICOCHEMICAL PROPERTIES</scope>
</reference>
<reference key="17">
    <citation type="journal article" date="2021" name="Cell Metab.">
        <title>Quantitative high-confidence human mitochondrial proteome and its dynamics in cellular context.</title>
        <authorList>
            <person name="Morgenstern M."/>
            <person name="Peikert C.D."/>
            <person name="Luebbert P."/>
            <person name="Suppanz I."/>
            <person name="Klemm C."/>
            <person name="Alka O."/>
            <person name="Steiert C."/>
            <person name="Naumenko N."/>
            <person name="Schendzielorz A."/>
            <person name="Melchionda L."/>
            <person name="Muehlhaeuser W.W.D."/>
            <person name="Knapp B."/>
            <person name="Busch J.D."/>
            <person name="Stiller S.B."/>
            <person name="Dannenmaier S."/>
            <person name="Lindau C."/>
            <person name="Licheva M."/>
            <person name="Eickhorst C."/>
            <person name="Galbusera R."/>
            <person name="Zerbes R.M."/>
            <person name="Ryan M.T."/>
            <person name="Kraft C."/>
            <person name="Kozjak-Pavlovic V."/>
            <person name="Drepper F."/>
            <person name="Dennerlein S."/>
            <person name="Oeljeklaus S."/>
            <person name="Pfanner N."/>
            <person name="Wiedemann N."/>
            <person name="Warscheid B."/>
        </authorList>
    </citation>
    <scope>SUBCELLULAR LOCATION</scope>
</reference>
<accession>Q86WA6</accession>
<accession>Q00306</accession>
<accession>Q13855</accession>
<accession>Q3KP51</accession>
<proteinExistence type="evidence at protein level"/>
<gene>
    <name type="primary">BPHL</name>
    <name type="synonym">MCNAA</name>
</gene>
<keyword id="KW-0002">3D-structure</keyword>
<keyword id="KW-0007">Acetylation</keyword>
<keyword id="KW-0025">Alternative splicing</keyword>
<keyword id="KW-0903">Direct protein sequencing</keyword>
<keyword id="KW-0378">Hydrolase</keyword>
<keyword id="KW-0460">Magnesium</keyword>
<keyword id="KW-0479">Metal-binding</keyword>
<keyword id="KW-0496">Mitochondrion</keyword>
<keyword id="KW-1267">Proteomics identification</keyword>
<keyword id="KW-1185">Reference proteome</keyword>
<keyword id="KW-0732">Signal</keyword>